<sequence>MVLEMKVIAFVGYPLSGKSTAAEVARELGLPVVVMGDVVREEAARRGLELTDENLGKVARELREKEGMDAIAKRCIPKIRELLKEHGVVVVDGIRGVAEVERFKKAFGDDFVLIAIECPLEVRFERVKMRKRSDDVSSIEELKERDRREESWGLKEAMEMADFTVENTGSYEDFVEKIRQILLKLAKNVEIEIRTKIHPTESEDKVLKAIRNIFPDAEIEISEEGEVYGRAYSLDRFRELLRKQRILDTARSEILKGRNGKEVTIYLNKQTATVSRINFCDENAVLSPIKVTFRLNNIPFSRFLDYIAPETKDGRPVKEIDKL</sequence>
<proteinExistence type="evidence at protein level"/>
<comment type="similarity">
    <text evidence="2">In the N-terminal section; belongs to the UPF0200 family.</text>
</comment>
<comment type="similarity">
    <text evidence="2">In the C-terminal section; belongs to the UPF0201 family.</text>
</comment>
<evidence type="ECO:0000250" key="1"/>
<evidence type="ECO:0000305" key="2"/>
<evidence type="ECO:0007829" key="3">
    <source>
        <dbReference type="PDB" id="3C9G"/>
    </source>
</evidence>
<dbReference type="EMBL" id="AE000782">
    <property type="protein sequence ID" value="AAB89852.1"/>
    <property type="molecule type" value="Genomic_DNA"/>
</dbReference>
<dbReference type="PIR" id="B69424">
    <property type="entry name" value="B69424"/>
</dbReference>
<dbReference type="PDB" id="3C9G">
    <property type="method" value="X-ray"/>
    <property type="resolution" value="2.30 A"/>
    <property type="chains" value="A/B=183-323"/>
</dbReference>
<dbReference type="PDBsum" id="3C9G"/>
<dbReference type="SMR" id="O28876"/>
<dbReference type="STRING" id="224325.AF_1395"/>
<dbReference type="PaxDb" id="224325-AF_1395"/>
<dbReference type="EnsemblBacteria" id="AAB89852">
    <property type="protein sequence ID" value="AAB89852"/>
    <property type="gene ID" value="AF_1395"/>
</dbReference>
<dbReference type="KEGG" id="afu:AF_1395"/>
<dbReference type="eggNOG" id="arCOG01045">
    <property type="taxonomic scope" value="Archaea"/>
</dbReference>
<dbReference type="HOGENOM" id="CLU_873208_0_0_2"/>
<dbReference type="PhylomeDB" id="O28876"/>
<dbReference type="EvolutionaryTrace" id="O28876"/>
<dbReference type="Proteomes" id="UP000002199">
    <property type="component" value="Chromosome"/>
</dbReference>
<dbReference type="GO" id="GO:0005524">
    <property type="term" value="F:ATP binding"/>
    <property type="evidence" value="ECO:0007669"/>
    <property type="project" value="UniProtKB-UniRule"/>
</dbReference>
<dbReference type="Gene3D" id="3.30.1440.10">
    <property type="match status" value="1"/>
</dbReference>
<dbReference type="Gene3D" id="3.40.50.300">
    <property type="entry name" value="P-loop containing nucleotide triphosphate hydrolases"/>
    <property type="match status" value="1"/>
</dbReference>
<dbReference type="HAMAP" id="MF_01111">
    <property type="entry name" value="UPF0200"/>
    <property type="match status" value="1"/>
</dbReference>
<dbReference type="HAMAP" id="MF_01112">
    <property type="entry name" value="UPF0201"/>
    <property type="match status" value="1"/>
</dbReference>
<dbReference type="InterPro" id="IPR022970">
    <property type="entry name" value="NTP_hydrolase-rel"/>
</dbReference>
<dbReference type="InterPro" id="IPR027417">
    <property type="entry name" value="P-loop_NTPase"/>
</dbReference>
<dbReference type="InterPro" id="IPR002739">
    <property type="entry name" value="PAB1135-like"/>
</dbReference>
<dbReference type="InterPro" id="IPR022803">
    <property type="entry name" value="Ribosomal_uL5_dom_sf"/>
</dbReference>
<dbReference type="PANTHER" id="PTHR41930:SF1">
    <property type="entry name" value="DEPHOSPHO-COA KINASE"/>
    <property type="match status" value="1"/>
</dbReference>
<dbReference type="PANTHER" id="PTHR41930">
    <property type="entry name" value="UPF0200 PROTEIN MJ1399"/>
    <property type="match status" value="1"/>
</dbReference>
<dbReference type="Pfam" id="PF13207">
    <property type="entry name" value="AAA_17"/>
    <property type="match status" value="1"/>
</dbReference>
<dbReference type="Pfam" id="PF01877">
    <property type="entry name" value="RNA_binding"/>
    <property type="match status" value="1"/>
</dbReference>
<dbReference type="SUPFAM" id="SSF52540">
    <property type="entry name" value="P-loop containing nucleoside triphosphate hydrolases"/>
    <property type="match status" value="1"/>
</dbReference>
<dbReference type="SUPFAM" id="SSF55282">
    <property type="entry name" value="RL5-like"/>
    <property type="match status" value="1"/>
</dbReference>
<organism>
    <name type="scientific">Archaeoglobus fulgidus (strain ATCC 49558 / DSM 4304 / JCM 9628 / NBRC 100126 / VC-16)</name>
    <dbReference type="NCBI Taxonomy" id="224325"/>
    <lineage>
        <taxon>Archaea</taxon>
        <taxon>Methanobacteriati</taxon>
        <taxon>Methanobacteriota</taxon>
        <taxon>Archaeoglobi</taxon>
        <taxon>Archaeoglobales</taxon>
        <taxon>Archaeoglobaceae</taxon>
        <taxon>Archaeoglobus</taxon>
    </lineage>
</organism>
<reference key="1">
    <citation type="journal article" date="1997" name="Nature">
        <title>The complete genome sequence of the hyperthermophilic, sulphate-reducing archaeon Archaeoglobus fulgidus.</title>
        <authorList>
            <person name="Klenk H.-P."/>
            <person name="Clayton R.A."/>
            <person name="Tomb J.-F."/>
            <person name="White O."/>
            <person name="Nelson K.E."/>
            <person name="Ketchum K.A."/>
            <person name="Dodson R.J."/>
            <person name="Gwinn M.L."/>
            <person name="Hickey E.K."/>
            <person name="Peterson J.D."/>
            <person name="Richardson D.L."/>
            <person name="Kerlavage A.R."/>
            <person name="Graham D.E."/>
            <person name="Kyrpides N.C."/>
            <person name="Fleischmann R.D."/>
            <person name="Quackenbush J."/>
            <person name="Lee N.H."/>
            <person name="Sutton G.G."/>
            <person name="Gill S.R."/>
            <person name="Kirkness E.F."/>
            <person name="Dougherty B.A."/>
            <person name="McKenney K."/>
            <person name="Adams M.D."/>
            <person name="Loftus B.J."/>
            <person name="Peterson S.N."/>
            <person name="Reich C.I."/>
            <person name="McNeil L.K."/>
            <person name="Badger J.H."/>
            <person name="Glodek A."/>
            <person name="Zhou L."/>
            <person name="Overbeek R."/>
            <person name="Gocayne J.D."/>
            <person name="Weidman J.F."/>
            <person name="McDonald L.A."/>
            <person name="Utterback T.R."/>
            <person name="Cotton M.D."/>
            <person name="Spriggs T."/>
            <person name="Artiach P."/>
            <person name="Kaine B.P."/>
            <person name="Sykes S.M."/>
            <person name="Sadow P.W."/>
            <person name="D'Andrea K.P."/>
            <person name="Bowman C."/>
            <person name="Fujii C."/>
            <person name="Garland S.A."/>
            <person name="Mason T.M."/>
            <person name="Olsen G.J."/>
            <person name="Fraser C.M."/>
            <person name="Smith H.O."/>
            <person name="Woese C.R."/>
            <person name="Venter J.C."/>
        </authorList>
    </citation>
    <scope>NUCLEOTIDE SEQUENCE [LARGE SCALE GENOMIC DNA]</scope>
    <source>
        <strain>ATCC 49558 / DSM 4304 / JCM 9628 / NBRC 100126 / VC-16</strain>
    </source>
</reference>
<name>Y1395_ARCFU</name>
<feature type="chain" id="PRO_0000094522" description="UPF0200/UPF0201 protein AF_1395">
    <location>
        <begin position="1"/>
        <end position="323"/>
    </location>
</feature>
<feature type="region of interest" description="UPF0200">
    <location>
        <begin position="1"/>
        <end position="185"/>
    </location>
</feature>
<feature type="region of interest" description="UPF0201">
    <location>
        <begin position="186"/>
        <end position="323"/>
    </location>
</feature>
<feature type="binding site" evidence="1">
    <location>
        <begin position="12"/>
        <end position="19"/>
    </location>
    <ligand>
        <name>ATP</name>
        <dbReference type="ChEBI" id="CHEBI:30616"/>
    </ligand>
</feature>
<feature type="strand" evidence="3">
    <location>
        <begin position="189"/>
        <end position="196"/>
    </location>
</feature>
<feature type="helix" evidence="3">
    <location>
        <begin position="203"/>
        <end position="213"/>
    </location>
</feature>
<feature type="strand" evidence="3">
    <location>
        <begin position="218"/>
        <end position="221"/>
    </location>
</feature>
<feature type="strand" evidence="3">
    <location>
        <begin position="226"/>
        <end position="231"/>
    </location>
</feature>
<feature type="helix" evidence="3">
    <location>
        <begin position="235"/>
        <end position="243"/>
    </location>
</feature>
<feature type="helix" evidence="3">
    <location>
        <begin position="248"/>
        <end position="256"/>
    </location>
</feature>
<feature type="strand" evidence="3">
    <location>
        <begin position="260"/>
        <end position="267"/>
    </location>
</feature>
<feature type="helix" evidence="3">
    <location>
        <begin position="269"/>
        <end position="272"/>
    </location>
</feature>
<feature type="turn" evidence="3">
    <location>
        <begin position="273"/>
        <end position="275"/>
    </location>
</feature>
<feature type="strand" evidence="3">
    <location>
        <begin position="289"/>
        <end position="298"/>
    </location>
</feature>
<feature type="helix" evidence="3">
    <location>
        <begin position="300"/>
        <end position="307"/>
    </location>
</feature>
<keyword id="KW-0002">3D-structure</keyword>
<keyword id="KW-0067">ATP-binding</keyword>
<keyword id="KW-0547">Nucleotide-binding</keyword>
<keyword id="KW-1185">Reference proteome</keyword>
<accession>O28876</accession>
<protein>
    <recommendedName>
        <fullName>UPF0200/UPF0201 protein AF_1395</fullName>
    </recommendedName>
</protein>
<gene>
    <name type="ordered locus">AF_1395</name>
</gene>